<gene>
    <name evidence="1" type="primary">serC</name>
    <name type="ordered locus">AFE_0895</name>
</gene>
<reference key="1">
    <citation type="journal article" date="2008" name="BMC Genomics">
        <title>Acidithiobacillus ferrooxidans metabolism: from genome sequence to industrial applications.</title>
        <authorList>
            <person name="Valdes J."/>
            <person name="Pedroso I."/>
            <person name="Quatrini R."/>
            <person name="Dodson R.J."/>
            <person name="Tettelin H."/>
            <person name="Blake R. II"/>
            <person name="Eisen J.A."/>
            <person name="Holmes D.S."/>
        </authorList>
    </citation>
    <scope>NUCLEOTIDE SEQUENCE [LARGE SCALE GENOMIC DNA]</scope>
    <source>
        <strain>ATCC 23270 / DSM 14882 / CIP 104768 / NCIMB 8455</strain>
    </source>
</reference>
<evidence type="ECO:0000255" key="1">
    <source>
        <dbReference type="HAMAP-Rule" id="MF_00160"/>
    </source>
</evidence>
<accession>B7J6V1</accession>
<organism>
    <name type="scientific">Acidithiobacillus ferrooxidans (strain ATCC 23270 / DSM 14882 / CIP 104768 / NCIMB 8455)</name>
    <name type="common">Ferrobacillus ferrooxidans (strain ATCC 23270)</name>
    <dbReference type="NCBI Taxonomy" id="243159"/>
    <lineage>
        <taxon>Bacteria</taxon>
        <taxon>Pseudomonadati</taxon>
        <taxon>Pseudomonadota</taxon>
        <taxon>Acidithiobacillia</taxon>
        <taxon>Acidithiobacillales</taxon>
        <taxon>Acidithiobacillaceae</taxon>
        <taxon>Acidithiobacillus</taxon>
    </lineage>
</organism>
<dbReference type="EC" id="2.6.1.52" evidence="1"/>
<dbReference type="EMBL" id="CP001219">
    <property type="protein sequence ID" value="ACK78490.1"/>
    <property type="molecule type" value="Genomic_DNA"/>
</dbReference>
<dbReference type="RefSeq" id="WP_012536419.1">
    <property type="nucleotide sequence ID" value="NC_011761.1"/>
</dbReference>
<dbReference type="SMR" id="B7J6V1"/>
<dbReference type="STRING" id="243159.AFE_0895"/>
<dbReference type="PaxDb" id="243159-AFE_0895"/>
<dbReference type="GeneID" id="65280219"/>
<dbReference type="KEGG" id="afr:AFE_0895"/>
<dbReference type="eggNOG" id="COG1932">
    <property type="taxonomic scope" value="Bacteria"/>
</dbReference>
<dbReference type="HOGENOM" id="CLU_034866_0_2_6"/>
<dbReference type="UniPathway" id="UPA00135">
    <property type="reaction ID" value="UER00197"/>
</dbReference>
<dbReference type="UniPathway" id="UPA00244">
    <property type="reaction ID" value="UER00311"/>
</dbReference>
<dbReference type="Proteomes" id="UP000001362">
    <property type="component" value="Chromosome"/>
</dbReference>
<dbReference type="GO" id="GO:0005737">
    <property type="term" value="C:cytoplasm"/>
    <property type="evidence" value="ECO:0007669"/>
    <property type="project" value="UniProtKB-SubCell"/>
</dbReference>
<dbReference type="GO" id="GO:0004648">
    <property type="term" value="F:O-phospho-L-serine:2-oxoglutarate aminotransferase activity"/>
    <property type="evidence" value="ECO:0007669"/>
    <property type="project" value="UniProtKB-UniRule"/>
</dbReference>
<dbReference type="GO" id="GO:0030170">
    <property type="term" value="F:pyridoxal phosphate binding"/>
    <property type="evidence" value="ECO:0007669"/>
    <property type="project" value="UniProtKB-UniRule"/>
</dbReference>
<dbReference type="GO" id="GO:0006564">
    <property type="term" value="P:L-serine biosynthetic process"/>
    <property type="evidence" value="ECO:0007669"/>
    <property type="project" value="UniProtKB-UniRule"/>
</dbReference>
<dbReference type="GO" id="GO:0008615">
    <property type="term" value="P:pyridoxine biosynthetic process"/>
    <property type="evidence" value="ECO:0007669"/>
    <property type="project" value="UniProtKB-UniRule"/>
</dbReference>
<dbReference type="CDD" id="cd00611">
    <property type="entry name" value="PSAT_like"/>
    <property type="match status" value="1"/>
</dbReference>
<dbReference type="FunFam" id="3.40.640.10:FF:000010">
    <property type="entry name" value="Phosphoserine aminotransferase"/>
    <property type="match status" value="1"/>
</dbReference>
<dbReference type="FunFam" id="3.90.1150.10:FF:000006">
    <property type="entry name" value="Phosphoserine aminotransferase"/>
    <property type="match status" value="1"/>
</dbReference>
<dbReference type="Gene3D" id="3.90.1150.10">
    <property type="entry name" value="Aspartate Aminotransferase, domain 1"/>
    <property type="match status" value="1"/>
</dbReference>
<dbReference type="Gene3D" id="3.40.640.10">
    <property type="entry name" value="Type I PLP-dependent aspartate aminotransferase-like (Major domain)"/>
    <property type="match status" value="1"/>
</dbReference>
<dbReference type="HAMAP" id="MF_00160">
    <property type="entry name" value="SerC_aminotrans_5"/>
    <property type="match status" value="1"/>
</dbReference>
<dbReference type="InterPro" id="IPR000192">
    <property type="entry name" value="Aminotrans_V_dom"/>
</dbReference>
<dbReference type="InterPro" id="IPR020578">
    <property type="entry name" value="Aminotrans_V_PyrdxlP_BS"/>
</dbReference>
<dbReference type="InterPro" id="IPR022278">
    <property type="entry name" value="Pser_aminoTfrase"/>
</dbReference>
<dbReference type="InterPro" id="IPR015424">
    <property type="entry name" value="PyrdxlP-dep_Trfase"/>
</dbReference>
<dbReference type="InterPro" id="IPR015421">
    <property type="entry name" value="PyrdxlP-dep_Trfase_major"/>
</dbReference>
<dbReference type="InterPro" id="IPR015422">
    <property type="entry name" value="PyrdxlP-dep_Trfase_small"/>
</dbReference>
<dbReference type="NCBIfam" id="NF003764">
    <property type="entry name" value="PRK05355.1"/>
    <property type="match status" value="1"/>
</dbReference>
<dbReference type="NCBIfam" id="TIGR01364">
    <property type="entry name" value="serC_1"/>
    <property type="match status" value="1"/>
</dbReference>
<dbReference type="PANTHER" id="PTHR43247">
    <property type="entry name" value="PHOSPHOSERINE AMINOTRANSFERASE"/>
    <property type="match status" value="1"/>
</dbReference>
<dbReference type="PANTHER" id="PTHR43247:SF1">
    <property type="entry name" value="PHOSPHOSERINE AMINOTRANSFERASE"/>
    <property type="match status" value="1"/>
</dbReference>
<dbReference type="Pfam" id="PF00266">
    <property type="entry name" value="Aminotran_5"/>
    <property type="match status" value="1"/>
</dbReference>
<dbReference type="PIRSF" id="PIRSF000525">
    <property type="entry name" value="SerC"/>
    <property type="match status" value="1"/>
</dbReference>
<dbReference type="SUPFAM" id="SSF53383">
    <property type="entry name" value="PLP-dependent transferases"/>
    <property type="match status" value="1"/>
</dbReference>
<dbReference type="PROSITE" id="PS00595">
    <property type="entry name" value="AA_TRANSFER_CLASS_5"/>
    <property type="match status" value="1"/>
</dbReference>
<protein>
    <recommendedName>
        <fullName evidence="1">Phosphoserine aminotransferase</fullName>
        <ecNumber evidence="1">2.6.1.52</ecNumber>
    </recommendedName>
    <alternativeName>
        <fullName evidence="1">Phosphohydroxythreonine aminotransferase</fullName>
        <shortName evidence="1">PSAT</shortName>
    </alternativeName>
</protein>
<proteinExistence type="inferred from homology"/>
<keyword id="KW-0028">Amino-acid biosynthesis</keyword>
<keyword id="KW-0032">Aminotransferase</keyword>
<keyword id="KW-0963">Cytoplasm</keyword>
<keyword id="KW-0663">Pyridoxal phosphate</keyword>
<keyword id="KW-0664">Pyridoxine biosynthesis</keyword>
<keyword id="KW-1185">Reference proteome</keyword>
<keyword id="KW-0718">Serine biosynthesis</keyword>
<keyword id="KW-0808">Transferase</keyword>
<name>SERC_ACIF2</name>
<feature type="chain" id="PRO_1000123465" description="Phosphoserine aminotransferase">
    <location>
        <begin position="1"/>
        <end position="362"/>
    </location>
</feature>
<feature type="binding site" evidence="1">
    <location>
        <position position="43"/>
    </location>
    <ligand>
        <name>L-glutamate</name>
        <dbReference type="ChEBI" id="CHEBI:29985"/>
    </ligand>
</feature>
<feature type="binding site" evidence="1">
    <location>
        <begin position="77"/>
        <end position="78"/>
    </location>
    <ligand>
        <name>pyridoxal 5'-phosphate</name>
        <dbReference type="ChEBI" id="CHEBI:597326"/>
    </ligand>
</feature>
<feature type="binding site" evidence="1">
    <location>
        <position position="103"/>
    </location>
    <ligand>
        <name>pyridoxal 5'-phosphate</name>
        <dbReference type="ChEBI" id="CHEBI:597326"/>
    </ligand>
</feature>
<feature type="binding site" evidence="1">
    <location>
        <position position="153"/>
    </location>
    <ligand>
        <name>pyridoxal 5'-phosphate</name>
        <dbReference type="ChEBI" id="CHEBI:597326"/>
    </ligand>
</feature>
<feature type="binding site" evidence="1">
    <location>
        <position position="173"/>
    </location>
    <ligand>
        <name>pyridoxal 5'-phosphate</name>
        <dbReference type="ChEBI" id="CHEBI:597326"/>
    </ligand>
</feature>
<feature type="binding site" evidence="1">
    <location>
        <position position="196"/>
    </location>
    <ligand>
        <name>pyridoxal 5'-phosphate</name>
        <dbReference type="ChEBI" id="CHEBI:597326"/>
    </ligand>
</feature>
<feature type="binding site" evidence="1">
    <location>
        <begin position="238"/>
        <end position="239"/>
    </location>
    <ligand>
        <name>pyridoxal 5'-phosphate</name>
        <dbReference type="ChEBI" id="CHEBI:597326"/>
    </ligand>
</feature>
<feature type="modified residue" description="N6-(pyridoxal phosphate)lysine" evidence="1">
    <location>
        <position position="197"/>
    </location>
</feature>
<comment type="function">
    <text evidence="1">Catalyzes the reversible conversion of 3-phosphohydroxypyruvate to phosphoserine and of 3-hydroxy-2-oxo-4-phosphonooxybutanoate to phosphohydroxythreonine.</text>
</comment>
<comment type="catalytic activity">
    <reaction evidence="1">
        <text>O-phospho-L-serine + 2-oxoglutarate = 3-phosphooxypyruvate + L-glutamate</text>
        <dbReference type="Rhea" id="RHEA:14329"/>
        <dbReference type="ChEBI" id="CHEBI:16810"/>
        <dbReference type="ChEBI" id="CHEBI:18110"/>
        <dbReference type="ChEBI" id="CHEBI:29985"/>
        <dbReference type="ChEBI" id="CHEBI:57524"/>
        <dbReference type="EC" id="2.6.1.52"/>
    </reaction>
</comment>
<comment type="catalytic activity">
    <reaction evidence="1">
        <text>4-(phosphooxy)-L-threonine + 2-oxoglutarate = (R)-3-hydroxy-2-oxo-4-phosphooxybutanoate + L-glutamate</text>
        <dbReference type="Rhea" id="RHEA:16573"/>
        <dbReference type="ChEBI" id="CHEBI:16810"/>
        <dbReference type="ChEBI" id="CHEBI:29985"/>
        <dbReference type="ChEBI" id="CHEBI:58452"/>
        <dbReference type="ChEBI" id="CHEBI:58538"/>
        <dbReference type="EC" id="2.6.1.52"/>
    </reaction>
</comment>
<comment type="cofactor">
    <cofactor evidence="1">
        <name>pyridoxal 5'-phosphate</name>
        <dbReference type="ChEBI" id="CHEBI:597326"/>
    </cofactor>
    <text evidence="1">Binds 1 pyridoxal phosphate per subunit.</text>
</comment>
<comment type="pathway">
    <text evidence="1">Amino-acid biosynthesis; L-serine biosynthesis; L-serine from 3-phospho-D-glycerate: step 2/3.</text>
</comment>
<comment type="pathway">
    <text evidence="1">Cofactor biosynthesis; pyridoxine 5'-phosphate biosynthesis; pyridoxine 5'-phosphate from D-erythrose 4-phosphate: step 3/5.</text>
</comment>
<comment type="subunit">
    <text evidence="1">Homodimer.</text>
</comment>
<comment type="subcellular location">
    <subcellularLocation>
        <location evidence="1">Cytoplasm</location>
    </subcellularLocation>
</comment>
<comment type="similarity">
    <text evidence="1">Belongs to the class-V pyridoxal-phosphate-dependent aminotransferase family. SerC subfamily.</text>
</comment>
<sequence>MNQTIFNFSAGPAVLPHVVLEQVQAELLDWHGSGMSVMEMSHRGPEFMKIAAEAEQDLRDLLDIPANYKILFLQGGATLQFAMVPLNLMRGHGKASYVQTGIWSKKAIAEARRFTAVEIAASNEDRHASYVPMQADWQVSPDTAYVHITGNETIGGVEFDFIPDLGDIPLVSDASSHILSKPTDVSRFGLIYAGAQKNIGPAGLTLVIVRDDLLGHAPANTATMLDYAVYAKEESMHNTPPTFAIYVAGLVFKWLKQLGGLERMAEINARKARLLYDAIDESRGFYANPVETRNRSRMNVPFTLADAAMDEAFLKGARSHGLIQLKGHRSVGGMRASIYNAMPEAGVQILADYLRDFARQHG</sequence>